<feature type="chain" id="PRO_1000204630" description="Glutamate racemase">
    <location>
        <begin position="1"/>
        <end position="285"/>
    </location>
</feature>
<feature type="active site" description="Proton donor/acceptor" evidence="1">
    <location>
        <position position="94"/>
    </location>
</feature>
<feature type="active site" description="Proton donor/acceptor" evidence="1">
    <location>
        <position position="206"/>
    </location>
</feature>
<feature type="binding site" evidence="1">
    <location>
        <begin position="30"/>
        <end position="31"/>
    </location>
    <ligand>
        <name>substrate</name>
    </ligand>
</feature>
<feature type="binding site" evidence="1">
    <location>
        <begin position="62"/>
        <end position="63"/>
    </location>
    <ligand>
        <name>substrate</name>
    </ligand>
</feature>
<feature type="binding site" evidence="1">
    <location>
        <begin position="95"/>
        <end position="96"/>
    </location>
    <ligand>
        <name>substrate</name>
    </ligand>
</feature>
<feature type="binding site" evidence="1">
    <location>
        <begin position="207"/>
        <end position="208"/>
    </location>
    <ligand>
        <name>substrate</name>
    </ligand>
</feature>
<reference key="1">
    <citation type="submission" date="2009-07" db="EMBL/GenBank/DDBJ databases">
        <title>Complete sequence of Pectobacterium carotovorum subsp. carotovorum PC1.</title>
        <authorList>
            <consortium name="US DOE Joint Genome Institute"/>
            <person name="Lucas S."/>
            <person name="Copeland A."/>
            <person name="Lapidus A."/>
            <person name="Glavina del Rio T."/>
            <person name="Tice H."/>
            <person name="Bruce D."/>
            <person name="Goodwin L."/>
            <person name="Pitluck S."/>
            <person name="Munk A.C."/>
            <person name="Brettin T."/>
            <person name="Detter J.C."/>
            <person name="Han C."/>
            <person name="Tapia R."/>
            <person name="Larimer F."/>
            <person name="Land M."/>
            <person name="Hauser L."/>
            <person name="Kyrpides N."/>
            <person name="Mikhailova N."/>
            <person name="Balakrishnan V."/>
            <person name="Glasner J."/>
            <person name="Perna N.T."/>
        </authorList>
    </citation>
    <scope>NUCLEOTIDE SEQUENCE [LARGE SCALE GENOMIC DNA]</scope>
    <source>
        <strain>PC1</strain>
    </source>
</reference>
<evidence type="ECO:0000255" key="1">
    <source>
        <dbReference type="HAMAP-Rule" id="MF_00258"/>
    </source>
</evidence>
<keyword id="KW-0133">Cell shape</keyword>
<keyword id="KW-0961">Cell wall biogenesis/degradation</keyword>
<keyword id="KW-0413">Isomerase</keyword>
<keyword id="KW-0573">Peptidoglycan synthesis</keyword>
<gene>
    <name evidence="1" type="primary">murI</name>
    <name type="ordered locus">PC1_0193</name>
</gene>
<proteinExistence type="inferred from homology"/>
<accession>C6DHQ3</accession>
<organism>
    <name type="scientific">Pectobacterium carotovorum subsp. carotovorum (strain PC1)</name>
    <dbReference type="NCBI Taxonomy" id="561230"/>
    <lineage>
        <taxon>Bacteria</taxon>
        <taxon>Pseudomonadati</taxon>
        <taxon>Pseudomonadota</taxon>
        <taxon>Gammaproteobacteria</taxon>
        <taxon>Enterobacterales</taxon>
        <taxon>Pectobacteriaceae</taxon>
        <taxon>Pectobacterium</taxon>
    </lineage>
</organism>
<sequence>MATARQGENTISPEAIPSNLPSRPTVLVFDSGVGGLSVYDEIRQLLPDLHYIYAFDNEAFPYGEKSQQFIIERVVEIVNAVQLRHQLALVVIACNTASTISLPALRERFTFPVVGVVPAVKPAAKLTRNGVVGLLATRATVQRPYTHELIARFATDCQILSLGSSELVELAEAKLQGETISISELQKILRPWLRLPEPPDTVVLGCTHFPLLAEELKAALPDGTRLVDSGAAIARRTAWLIANLDNPPLSTDKNLVYCLAITPKVATLWPILQRYGFDSLEKLPL</sequence>
<protein>
    <recommendedName>
        <fullName evidence="1">Glutamate racemase</fullName>
        <ecNumber evidence="1">5.1.1.3</ecNumber>
    </recommendedName>
</protein>
<comment type="function">
    <text evidence="1">Provides the (R)-glutamate required for cell wall biosynthesis.</text>
</comment>
<comment type="catalytic activity">
    <reaction evidence="1">
        <text>L-glutamate = D-glutamate</text>
        <dbReference type="Rhea" id="RHEA:12813"/>
        <dbReference type="ChEBI" id="CHEBI:29985"/>
        <dbReference type="ChEBI" id="CHEBI:29986"/>
        <dbReference type="EC" id="5.1.1.3"/>
    </reaction>
</comment>
<comment type="pathway">
    <text evidence="1">Cell wall biogenesis; peptidoglycan biosynthesis.</text>
</comment>
<comment type="similarity">
    <text evidence="1">Belongs to the aspartate/glutamate racemases family.</text>
</comment>
<dbReference type="EC" id="5.1.1.3" evidence="1"/>
<dbReference type="EMBL" id="CP001657">
    <property type="protein sequence ID" value="ACT11253.1"/>
    <property type="molecule type" value="Genomic_DNA"/>
</dbReference>
<dbReference type="RefSeq" id="WP_012772926.1">
    <property type="nucleotide sequence ID" value="NC_012917.1"/>
</dbReference>
<dbReference type="SMR" id="C6DHQ3"/>
<dbReference type="STRING" id="561230.PC1_0193"/>
<dbReference type="GeneID" id="67792034"/>
<dbReference type="KEGG" id="pct:PC1_0193"/>
<dbReference type="eggNOG" id="COG0796">
    <property type="taxonomic scope" value="Bacteria"/>
</dbReference>
<dbReference type="HOGENOM" id="CLU_052344_2_0_6"/>
<dbReference type="OrthoDB" id="9801055at2"/>
<dbReference type="UniPathway" id="UPA00219"/>
<dbReference type="Proteomes" id="UP000002736">
    <property type="component" value="Chromosome"/>
</dbReference>
<dbReference type="GO" id="GO:0008881">
    <property type="term" value="F:glutamate racemase activity"/>
    <property type="evidence" value="ECO:0007669"/>
    <property type="project" value="UniProtKB-UniRule"/>
</dbReference>
<dbReference type="GO" id="GO:0071555">
    <property type="term" value="P:cell wall organization"/>
    <property type="evidence" value="ECO:0007669"/>
    <property type="project" value="UniProtKB-KW"/>
</dbReference>
<dbReference type="GO" id="GO:0009252">
    <property type="term" value="P:peptidoglycan biosynthetic process"/>
    <property type="evidence" value="ECO:0007669"/>
    <property type="project" value="UniProtKB-UniRule"/>
</dbReference>
<dbReference type="GO" id="GO:0008360">
    <property type="term" value="P:regulation of cell shape"/>
    <property type="evidence" value="ECO:0007669"/>
    <property type="project" value="UniProtKB-KW"/>
</dbReference>
<dbReference type="FunFam" id="3.40.50.1860:FF:000002">
    <property type="entry name" value="Glutamate racemase"/>
    <property type="match status" value="1"/>
</dbReference>
<dbReference type="Gene3D" id="3.40.50.1860">
    <property type="match status" value="2"/>
</dbReference>
<dbReference type="HAMAP" id="MF_00258">
    <property type="entry name" value="Glu_racemase"/>
    <property type="match status" value="1"/>
</dbReference>
<dbReference type="InterPro" id="IPR015942">
    <property type="entry name" value="Asp/Glu/hydantoin_racemase"/>
</dbReference>
<dbReference type="InterPro" id="IPR001920">
    <property type="entry name" value="Asp/Glu_race"/>
</dbReference>
<dbReference type="InterPro" id="IPR018187">
    <property type="entry name" value="Asp/Glu_racemase_AS_1"/>
</dbReference>
<dbReference type="InterPro" id="IPR033134">
    <property type="entry name" value="Asp/Glu_racemase_AS_2"/>
</dbReference>
<dbReference type="InterPro" id="IPR004391">
    <property type="entry name" value="Glu_race"/>
</dbReference>
<dbReference type="NCBIfam" id="TIGR00067">
    <property type="entry name" value="glut_race"/>
    <property type="match status" value="1"/>
</dbReference>
<dbReference type="NCBIfam" id="NF002034">
    <property type="entry name" value="PRK00865.1-1"/>
    <property type="match status" value="1"/>
</dbReference>
<dbReference type="PANTHER" id="PTHR21198">
    <property type="entry name" value="GLUTAMATE RACEMASE"/>
    <property type="match status" value="1"/>
</dbReference>
<dbReference type="PANTHER" id="PTHR21198:SF2">
    <property type="entry name" value="GLUTAMATE RACEMASE"/>
    <property type="match status" value="1"/>
</dbReference>
<dbReference type="Pfam" id="PF01177">
    <property type="entry name" value="Asp_Glu_race"/>
    <property type="match status" value="1"/>
</dbReference>
<dbReference type="SUPFAM" id="SSF53681">
    <property type="entry name" value="Aspartate/glutamate racemase"/>
    <property type="match status" value="2"/>
</dbReference>
<dbReference type="PROSITE" id="PS00923">
    <property type="entry name" value="ASP_GLU_RACEMASE_1"/>
    <property type="match status" value="1"/>
</dbReference>
<dbReference type="PROSITE" id="PS00924">
    <property type="entry name" value="ASP_GLU_RACEMASE_2"/>
    <property type="match status" value="1"/>
</dbReference>
<name>MURI_PECCP</name>